<organism>
    <name type="scientific">Mus musculus</name>
    <name type="common">Mouse</name>
    <dbReference type="NCBI Taxonomy" id="10090"/>
    <lineage>
        <taxon>Eukaryota</taxon>
        <taxon>Metazoa</taxon>
        <taxon>Chordata</taxon>
        <taxon>Craniata</taxon>
        <taxon>Vertebrata</taxon>
        <taxon>Euteleostomi</taxon>
        <taxon>Mammalia</taxon>
        <taxon>Eutheria</taxon>
        <taxon>Euarchontoglires</taxon>
        <taxon>Glires</taxon>
        <taxon>Rodentia</taxon>
        <taxon>Myomorpha</taxon>
        <taxon>Muroidea</taxon>
        <taxon>Muridae</taxon>
        <taxon>Murinae</taxon>
        <taxon>Mus</taxon>
        <taxon>Mus</taxon>
    </lineage>
</organism>
<name>NLRC5_MOUSE</name>
<sequence length="1915" mass="211710">MDAESIRLNNENLWAWLVRLLSKNPEWLSAKLRSFLPTMDLDCSYEPSNPEVIHRQLNRLFAQGMATWKSFINDLCFELDVPLDMEIPLVSIWGPRDEFSKQLGAGEESCPGPQLYHGAKRPFQSYGSSPRRKNSKKQQLELAKKYLKLLKTSAQQWHGGVCPGAWLTPHSPQTYIPPVLQWSRATAPLDAQEGATLGDPEAADNIDVSIQDLFSFKAHKGPRVTVLLGKAGMGKTTLAYRLRWRWAQGQLDRFQALFLFEFRQLNMITQLPTLPQLLFDLYLMPESEPDAVFQYLKENAQEVLLIFDGLDEALHADSVGTDNAGSALTLFSELCHGNLLPGCWVMTTSRPGKLPSCVPTEAATVHMWGFDGLRVEKYVTCFFSDLLSQELALKEMRTNARLRGMCAIPALCTVTCFCLRRLLPGSSPGQSAALLPTITQLYLQMVETFSPSETLLDTSILGFGKVALRGLDTGKVVFSVEDISPQLMSFGAVHSLLTSFCIHTRPGHEEIGYAFVHLSLQEFFAALYLMASHTVDKDTLVEYVTLNSHWVLRTKGRLGLSDHLPAFLAGLASHTCHMFLCQLAQQDRAWVGSRQAAVIQVLRKLASRKLTGPKMIELYHCVAETQDLELARFTAQSLPSRLSFHNFPLTHADLAALANILEHRDDPIHLDFDGCPLEPHCPEALVGCGQVENLSFKSRKCGDAFAEALCRSLPTMGSLKTLGLTGSRITAQGISHLIQTLPLCSQLEEVSLHDNQLKDPEVLSLVELLPSLPKLQKLDLSRNSFSRSILLSLVKVAITCPTVRKLQVRELDLIFYLSPVTETATQQSGASDVQGKDSLKEGQSRSLQLRLQKCQLRIRDAEALVELFQKSPQLEEVNLSGNHLEDDGCRLVAEAASQLHIAQKLDLSDNGLSQTGVTYVLKAMSTCGTLEDLHISLLNNTVVLTFAQEPREQEGSCKGRAPLISFVSPVTSELSQRSRRIRLTHCGFLAKHTETLCEALRASCQTHNLDHLDLSDNSLGGKGVILLTELLPGLGPLKSLNLSRNGLSMDAVFSLVQCLSSLQWVFHLDVSLESDCIFLRGAGTSRDALEPKFQTGVQVLELSQRYTSRSFCLQECQLEPTSLTFLCATLEKSPGPLEVQLSCKSLSDDSLKILLQCLPQLPQLSLLQLRHTVLSSRSPFLLADIFNLCPRVRKVTLRSLCHAVLHFDSNEEQEGVCCGFPGCSLSQEHMETLCCALSKCNALSQLDLTDNLLGDIGLRCLLECLPQLPISGWLDLSHNNISQEGILYLLETLPSYPNIQEVSVSLSSEQIFRMCFSKKEGAGTSLRLCECSFSPEQVSKLASSLSQAQQLTELWLTKCHLDLPQLTMLLNLVNRPTGLLGLRLEEPWVDSVSLPALMEVCAQASGCLTELSISEIQRKLWLQLEFPHQEGNSDSMALRLAHCDLETEHSHLMIQLVETYARLQQLSLSQVSFNDNDGTSSKLLQNILLSSCELKSFRLTFSQVSTKSLTHLAFGLGHCHHLEELDFSNNSLREEDTELLMGALQGTCRLKKLHLSFLPLGASSLALLIQGLSRMTLLQDLCLSHNQIGDVGTQCLAAILPKLPELRKFDLSHNQIGDVGTQCLAAILPKLPELRKFNLSHNQIGHVGTQCLAAILPKLPELRKFDLSRNQIGDVGTQCLAAILPKLPELRKFDLSGNRIGPAGGVQLVKSLTHFEHLEEIKLGNNALGEPTALELAQRLPPQLRVLCLPSSHLGPEGALGLAQALEQCPHIEEVSLAENNLAGGVPRFSKRLPLLRQIDLEFCKIEDQAARHLAANLTLFPALEKLLLSGNLLGDEVAAELAQVLPQMGQLKKVNLEWNRITARGAQLLAQGLVQGSCVPVIRLWNNPILNDVAQSLQSQEPRLDFSITDQQTL</sequence>
<gene>
    <name type="primary">Nlrc5</name>
</gene>
<reference key="1">
    <citation type="journal article" date="2010" name="Cell">
        <title>NLRC5 negatively regulates the NF-kappaB and type I interferon signaling pathways.</title>
        <authorList>
            <person name="Cui J."/>
            <person name="Zhu L."/>
            <person name="Xia X."/>
            <person name="Wang H.Y."/>
            <person name="Legras X."/>
            <person name="Hong J."/>
            <person name="Ji J."/>
            <person name="Shen P."/>
            <person name="Zheng S."/>
            <person name="Chen Z.J."/>
            <person name="Wang R.F."/>
        </authorList>
    </citation>
    <scope>NUCLEOTIDE SEQUENCE [MRNA] (ISOFORM 1)</scope>
    <scope>FUNCTION</scope>
    <scope>TISSUE SPECIFICITY</scope>
    <scope>INDUCTION</scope>
    <source>
        <strain>BALB/cJ</strain>
    </source>
</reference>
<reference key="2">
    <citation type="journal article" date="2002" name="DNA Res.">
        <title>Prediction of the coding sequences of mouse homologues of KIAA gene: I. The complete nucleotide sequences of 100 mouse KIAA-homologous cDNAs identified by screening of terminal sequences of cDNA clones randomly sampled from size-fractionated libraries.</title>
        <authorList>
            <person name="Okazaki N."/>
            <person name="Kikuno R."/>
            <person name="Ohara R."/>
            <person name="Inamoto S."/>
            <person name="Hara Y."/>
            <person name="Nagase T."/>
            <person name="Ohara O."/>
            <person name="Koga H."/>
        </authorList>
    </citation>
    <scope>NUCLEOTIDE SEQUENCE [LARGE SCALE MRNA] OF 285-1915 (ISOFORM 2)</scope>
    <source>
        <tissue>Spleen</tissue>
    </source>
</reference>
<protein>
    <recommendedName>
        <fullName>Protein NLRC5</fullName>
    </recommendedName>
</protein>
<comment type="function">
    <text evidence="4">Probable regulator of the NF-kappa-B and type I interferon signaling pathways. May also regulate the type II interferon signaling pathway. Plays a role in homeostatic control of innate immunity and in antiviral defense mechanisms.</text>
</comment>
<comment type="subunit">
    <text evidence="1">Interacts with CHUK and IKBKB; prevents CHUK and IKBKB phosphorylation and inhibits their kinase activity. Interacts with RIGI and IFIH1; blocks the interaction of MAVS to RIGI.</text>
</comment>
<comment type="subcellular location">
    <subcellularLocation>
        <location evidence="1">Cytoplasm</location>
    </subcellularLocation>
</comment>
<comment type="alternative products">
    <event type="alternative splicing"/>
    <isoform>
        <id>C3VPR6-1</id>
        <name>1</name>
        <sequence type="displayed"/>
    </isoform>
    <isoform>
        <id>C3VPR6-2</id>
        <name>2</name>
        <sequence type="described" ref="VSP_039702 VSP_039703"/>
    </isoform>
</comment>
<comment type="tissue specificity">
    <text evidence="4">Expressed in spleen, thymus and lung.</text>
</comment>
<comment type="induction">
    <text evidence="4">By interferon gamma. By LPS and viruses (at protein level).</text>
</comment>
<comment type="miscellaneous">
    <molecule>Isoform 2</molecule>
    <text evidence="6">Due to intron retention.</text>
</comment>
<comment type="similarity">
    <text evidence="6">Belongs to the NLRP family.</text>
</comment>
<comment type="caution">
    <text evidence="6">Supposed to contain a CARD domain at the N-terminus. However, this domain is not detected by Pfam, PROSITE or SMART. Has a weak similarity with a DAPIN domain.</text>
</comment>
<proteinExistence type="evidence at protein level"/>
<feature type="chain" id="PRO_0000397867" description="Protein NLRC5">
    <location>
        <begin position="1"/>
        <end position="1915"/>
    </location>
</feature>
<feature type="domain" description="NACHT" evidence="2">
    <location>
        <begin position="223"/>
        <end position="542"/>
    </location>
</feature>
<feature type="repeat" description="LRR 1">
    <location>
        <begin position="622"/>
        <end position="646"/>
    </location>
</feature>
<feature type="repeat" description="LRR 2">
    <location>
        <begin position="716"/>
        <end position="740"/>
    </location>
</feature>
<feature type="repeat" description="LRR 3">
    <location>
        <begin position="744"/>
        <end position="771"/>
    </location>
</feature>
<feature type="repeat" description="LRR 4">
    <location>
        <begin position="772"/>
        <end position="796"/>
    </location>
</feature>
<feature type="repeat" description="LRR 5">
    <location>
        <begin position="871"/>
        <end position="898"/>
    </location>
</feature>
<feature type="repeat" description="LRR 6">
    <location>
        <begin position="900"/>
        <end position="923"/>
    </location>
</feature>
<feature type="repeat" description="LRR 7">
    <location>
        <begin position="930"/>
        <end position="953"/>
    </location>
</feature>
<feature type="repeat" description="LRR 8">
    <location>
        <begin position="1006"/>
        <end position="1033"/>
    </location>
</feature>
<feature type="repeat" description="LRR 9">
    <location>
        <begin position="1034"/>
        <end position="1055"/>
    </location>
</feature>
<feature type="repeat" description="LRR 10">
    <location>
        <begin position="1138"/>
        <end position="1161"/>
    </location>
</feature>
<feature type="repeat" description="LRR 11">
    <location>
        <begin position="1162"/>
        <end position="1184"/>
    </location>
</feature>
<feature type="repeat" description="LRR 12">
    <location>
        <begin position="1240"/>
        <end position="1263"/>
    </location>
</feature>
<feature type="repeat" description="LRR 13">
    <location>
        <begin position="1265"/>
        <end position="1292"/>
    </location>
</feature>
<feature type="repeat" description="LRR 14">
    <location>
        <begin position="1348"/>
        <end position="1371"/>
    </location>
</feature>
<feature type="repeat" description="LRR 15">
    <location>
        <begin position="1481"/>
        <end position="1504"/>
    </location>
</feature>
<feature type="repeat" description="LRR 16">
    <location>
        <begin position="1519"/>
        <end position="1542"/>
    </location>
</feature>
<feature type="repeat" description="LRR 17">
    <location>
        <begin position="1552"/>
        <end position="1575"/>
    </location>
</feature>
<feature type="repeat" description="LRR 18">
    <location>
        <begin position="1576"/>
        <end position="1598"/>
    </location>
</feature>
<feature type="repeat" description="LRR 19">
    <location>
        <begin position="1603"/>
        <end position="1626"/>
    </location>
</feature>
<feature type="repeat" description="LRR 20">
    <location>
        <begin position="1631"/>
        <end position="1654"/>
    </location>
</feature>
<feature type="repeat" description="LRR 21">
    <location>
        <begin position="1659"/>
        <end position="1682"/>
    </location>
</feature>
<feature type="repeat" description="LRR 22">
    <location>
        <begin position="1687"/>
        <end position="1711"/>
    </location>
</feature>
<feature type="repeat" description="LRR 23">
    <location>
        <begin position="1715"/>
        <end position="1738"/>
    </location>
</feature>
<feature type="repeat" description="LRR 24">
    <location>
        <begin position="1741"/>
        <end position="1768"/>
    </location>
</feature>
<feature type="repeat" description="LRR 25">
    <location>
        <begin position="1769"/>
        <end position="1795"/>
    </location>
</feature>
<feature type="repeat" description="LRR 26">
    <location>
        <begin position="1821"/>
        <end position="1845"/>
    </location>
</feature>
<feature type="repeat" description="LRR 27">
    <location>
        <begin position="1849"/>
        <end position="1872"/>
    </location>
</feature>
<feature type="region of interest" description="Disordered" evidence="3">
    <location>
        <begin position="103"/>
        <end position="137"/>
    </location>
</feature>
<feature type="binding site" evidence="2">
    <location>
        <begin position="229"/>
        <end position="236"/>
    </location>
    <ligand>
        <name>ATP</name>
        <dbReference type="ChEBI" id="CHEBI:30616"/>
    </ligand>
</feature>
<feature type="splice variant" id="VSP_039702" description="In isoform 2." evidence="5">
    <original>LEEPWVDSV</original>
    <variation>YLPALGRRV</variation>
    <location>
        <begin position="1384"/>
        <end position="1392"/>
    </location>
</feature>
<feature type="splice variant" id="VSP_039703" description="In isoform 2." evidence="5">
    <location>
        <begin position="1393"/>
        <end position="1915"/>
    </location>
</feature>
<feature type="sequence conflict" description="In Ref. 2; BAD90135." evidence="6" ref="2">
    <original>SF</original>
    <variation>AS</variation>
    <location>
        <begin position="489"/>
        <end position="490"/>
    </location>
</feature>
<feature type="sequence conflict" description="In Ref. 2; BAD90135." evidence="6" ref="2">
    <original>M</original>
    <variation>T</variation>
    <location>
        <position position="578"/>
    </location>
</feature>
<feature type="sequence conflict" description="In Ref. 2; BAD90135." evidence="6" ref="2">
    <original>R</original>
    <variation>C</variation>
    <location>
        <position position="641"/>
    </location>
</feature>
<feature type="sequence conflict" description="In Ref. 2; BAD90135." evidence="6" ref="2">
    <original>N</original>
    <variation>K</variation>
    <location>
        <position position="646"/>
    </location>
</feature>
<feature type="sequence conflict" description="In Ref. 2; BAD90135." evidence="6" ref="2">
    <original>V</original>
    <variation>I</variation>
    <location>
        <position position="833"/>
    </location>
</feature>
<feature type="sequence conflict" description="In Ref. 1; ACP40992." evidence="6" ref="1">
    <original>G</original>
    <variation>R</variation>
    <location>
        <position position="881"/>
    </location>
</feature>
<feature type="sequence conflict" description="In Ref. 2; BAD90135." evidence="6" ref="2">
    <original>A</original>
    <variation>T</variation>
    <location>
        <position position="896"/>
    </location>
</feature>
<feature type="sequence conflict" description="In Ref. 2; BAD90135." evidence="6" ref="2">
    <original>N</original>
    <variation>S</variation>
    <location>
        <position position="939"/>
    </location>
</feature>
<feature type="sequence conflict" description="In Ref. 2; BAD90135." evidence="6" ref="2">
    <original>R</original>
    <variation>Q</variation>
    <location>
        <position position="1105"/>
    </location>
</feature>
<feature type="helix" evidence="7">
    <location>
        <begin position="2"/>
        <end position="4"/>
    </location>
</feature>
<feature type="helix" evidence="7">
    <location>
        <begin position="11"/>
        <end position="22"/>
    </location>
</feature>
<feature type="helix" evidence="7">
    <location>
        <begin position="25"/>
        <end position="35"/>
    </location>
</feature>
<feature type="strand" evidence="7">
    <location>
        <begin position="45"/>
        <end position="48"/>
    </location>
</feature>
<feature type="helix" evidence="7">
    <location>
        <begin position="50"/>
        <end position="63"/>
    </location>
</feature>
<feature type="helix" evidence="7">
    <location>
        <begin position="65"/>
        <end position="78"/>
    </location>
</feature>
<feature type="helix" evidence="7">
    <location>
        <begin position="86"/>
        <end position="90"/>
    </location>
</feature>
<feature type="helix" evidence="7">
    <location>
        <begin position="91"/>
        <end position="93"/>
    </location>
</feature>
<evidence type="ECO:0000250" key="1"/>
<evidence type="ECO:0000255" key="2">
    <source>
        <dbReference type="PROSITE-ProRule" id="PRU00136"/>
    </source>
</evidence>
<evidence type="ECO:0000256" key="3">
    <source>
        <dbReference type="SAM" id="MobiDB-lite"/>
    </source>
</evidence>
<evidence type="ECO:0000269" key="4">
    <source>
    </source>
</evidence>
<evidence type="ECO:0000303" key="5">
    <source>
    </source>
</evidence>
<evidence type="ECO:0000305" key="6"/>
<evidence type="ECO:0007829" key="7">
    <source>
        <dbReference type="PDB" id="2MJM"/>
    </source>
</evidence>
<accession>C3VPR6</accession>
<accession>Q571H9</accession>
<dbReference type="EMBL" id="FJ889356">
    <property type="protein sequence ID" value="ACP40992.1"/>
    <property type="molecule type" value="mRNA"/>
</dbReference>
<dbReference type="EMBL" id="AK220210">
    <property type="protein sequence ID" value="BAD90135.1"/>
    <property type="molecule type" value="mRNA"/>
</dbReference>
<dbReference type="CCDS" id="CCDS59741.1">
    <molecule id="C3VPR6-1"/>
</dbReference>
<dbReference type="RefSeq" id="NP_001028379.2">
    <molecule id="C3VPR6-1"/>
    <property type="nucleotide sequence ID" value="NM_001033207.3"/>
</dbReference>
<dbReference type="RefSeq" id="XP_006531225.1">
    <molecule id="C3VPR6-1"/>
    <property type="nucleotide sequence ID" value="XM_006531162.3"/>
</dbReference>
<dbReference type="RefSeq" id="XP_006531226.1">
    <molecule id="C3VPR6-1"/>
    <property type="nucleotide sequence ID" value="XM_006531163.3"/>
</dbReference>
<dbReference type="RefSeq" id="XP_011246730.1">
    <molecule id="C3VPR6-1"/>
    <property type="nucleotide sequence ID" value="XM_011248428.2"/>
</dbReference>
<dbReference type="PDB" id="2MJM">
    <property type="method" value="NMR"/>
    <property type="chains" value="A=1-96"/>
</dbReference>
<dbReference type="PDBsum" id="2MJM"/>
<dbReference type="BMRB" id="C3VPR6"/>
<dbReference type="SMR" id="C3VPR6"/>
<dbReference type="FunCoup" id="C3VPR6">
    <property type="interactions" value="887"/>
</dbReference>
<dbReference type="IntAct" id="C3VPR6">
    <property type="interactions" value="2"/>
</dbReference>
<dbReference type="STRING" id="10090.ENSMUSP00000148677"/>
<dbReference type="iPTMnet" id="C3VPR6"/>
<dbReference type="PhosphoSitePlus" id="C3VPR6"/>
<dbReference type="PaxDb" id="10090-ENSMUSP00000138322"/>
<dbReference type="PeptideAtlas" id="C3VPR6"/>
<dbReference type="ProteomicsDB" id="293580">
    <molecule id="C3VPR6-1"/>
</dbReference>
<dbReference type="ProteomicsDB" id="293581">
    <molecule id="C3VPR6-2"/>
</dbReference>
<dbReference type="Antibodypedia" id="44042">
    <property type="antibodies" value="86 antibodies from 27 providers"/>
</dbReference>
<dbReference type="Ensembl" id="ENSMUST00000053085.12">
    <molecule id="C3VPR6-1"/>
    <property type="protein sequence ID" value="ENSMUSP00000138322.2"/>
    <property type="gene ID" value="ENSMUSG00000074151.15"/>
</dbReference>
<dbReference type="Ensembl" id="ENSMUST00000211816.2">
    <molecule id="C3VPR6-1"/>
    <property type="protein sequence ID" value="ENSMUSP00000148677.2"/>
    <property type="gene ID" value="ENSMUSG00000074151.15"/>
</dbReference>
<dbReference type="GeneID" id="434341"/>
<dbReference type="KEGG" id="mmu:434341"/>
<dbReference type="UCSC" id="uc009mwj.2">
    <molecule id="C3VPR6-2"/>
    <property type="organism name" value="mouse"/>
</dbReference>
<dbReference type="UCSC" id="uc012gio.1">
    <molecule id="C3VPR6-1"/>
    <property type="organism name" value="mouse"/>
</dbReference>
<dbReference type="AGR" id="MGI:3612191"/>
<dbReference type="CTD" id="84166"/>
<dbReference type="MGI" id="MGI:3612191">
    <property type="gene designation" value="Nlrc5"/>
</dbReference>
<dbReference type="VEuPathDB" id="HostDB:ENSMUSG00000074151"/>
<dbReference type="eggNOG" id="KOG4308">
    <property type="taxonomic scope" value="Eukaryota"/>
</dbReference>
<dbReference type="GeneTree" id="ENSGT00940000160652"/>
<dbReference type="HOGENOM" id="CLU_002522_1_0_1"/>
<dbReference type="InParanoid" id="C3VPR6"/>
<dbReference type="OMA" id="AQQDETW"/>
<dbReference type="OrthoDB" id="120976at2759"/>
<dbReference type="PhylomeDB" id="C3VPR6"/>
<dbReference type="Reactome" id="R-MMU-9758274">
    <property type="pathway name" value="Regulation of NF-kappa B signaling"/>
</dbReference>
<dbReference type="BioGRID-ORCS" id="434341">
    <property type="hits" value="5 hits in 77 CRISPR screens"/>
</dbReference>
<dbReference type="ChiTaRS" id="Nlrc5">
    <property type="organism name" value="mouse"/>
</dbReference>
<dbReference type="EvolutionaryTrace" id="C3VPR6"/>
<dbReference type="PRO" id="PR:C3VPR6"/>
<dbReference type="Proteomes" id="UP000000589">
    <property type="component" value="Chromosome 8"/>
</dbReference>
<dbReference type="RNAct" id="C3VPR6">
    <property type="molecule type" value="protein"/>
</dbReference>
<dbReference type="Bgee" id="ENSMUSG00000074151">
    <property type="expression patterns" value="Expressed in mesenteric lymph node and 87 other cell types or tissues"/>
</dbReference>
<dbReference type="ExpressionAtlas" id="C3VPR6">
    <property type="expression patterns" value="baseline and differential"/>
</dbReference>
<dbReference type="GO" id="GO:0005813">
    <property type="term" value="C:centrosome"/>
    <property type="evidence" value="ECO:0007669"/>
    <property type="project" value="Ensembl"/>
</dbReference>
<dbReference type="GO" id="GO:0005829">
    <property type="term" value="C:cytosol"/>
    <property type="evidence" value="ECO:0000314"/>
    <property type="project" value="BHF-UCL"/>
</dbReference>
<dbReference type="GO" id="GO:0005634">
    <property type="term" value="C:nucleus"/>
    <property type="evidence" value="ECO:0000314"/>
    <property type="project" value="BHF-UCL"/>
</dbReference>
<dbReference type="GO" id="GO:0005524">
    <property type="term" value="F:ATP binding"/>
    <property type="evidence" value="ECO:0007669"/>
    <property type="project" value="UniProtKB-KW"/>
</dbReference>
<dbReference type="GO" id="GO:0000978">
    <property type="term" value="F:RNA polymerase II cis-regulatory region sequence-specific DNA binding"/>
    <property type="evidence" value="ECO:0007669"/>
    <property type="project" value="Ensembl"/>
</dbReference>
<dbReference type="GO" id="GO:0051607">
    <property type="term" value="P:defense response to virus"/>
    <property type="evidence" value="ECO:0000250"/>
    <property type="project" value="UniProtKB"/>
</dbReference>
<dbReference type="GO" id="GO:0045087">
    <property type="term" value="P:innate immune response"/>
    <property type="evidence" value="ECO:0000315"/>
    <property type="project" value="UniProtKB"/>
</dbReference>
<dbReference type="GO" id="GO:0032088">
    <property type="term" value="P:negative regulation of NF-kappaB transcription factor activity"/>
    <property type="evidence" value="ECO:0000314"/>
    <property type="project" value="UniProtKB"/>
</dbReference>
<dbReference type="GO" id="GO:0060339">
    <property type="term" value="P:negative regulation of type I interferon-mediated signaling pathway"/>
    <property type="evidence" value="ECO:0000314"/>
    <property type="project" value="UniProtKB"/>
</dbReference>
<dbReference type="GO" id="GO:0045345">
    <property type="term" value="P:positive regulation of MHC class I biosynthetic process"/>
    <property type="evidence" value="ECO:0007669"/>
    <property type="project" value="Ensembl"/>
</dbReference>
<dbReference type="GO" id="GO:0045944">
    <property type="term" value="P:positive regulation of transcription by RNA polymerase II"/>
    <property type="evidence" value="ECO:0007669"/>
    <property type="project" value="Ensembl"/>
</dbReference>
<dbReference type="GO" id="GO:0060340">
    <property type="term" value="P:positive regulation of type I interferon-mediated signaling pathway"/>
    <property type="evidence" value="ECO:0000250"/>
    <property type="project" value="UniProtKB"/>
</dbReference>
<dbReference type="GO" id="GO:0060335">
    <property type="term" value="P:positive regulation of type II interferon-mediated signaling pathway"/>
    <property type="evidence" value="ECO:0000250"/>
    <property type="project" value="UniProtKB"/>
</dbReference>
<dbReference type="GO" id="GO:0009617">
    <property type="term" value="P:response to bacterium"/>
    <property type="evidence" value="ECO:0000270"/>
    <property type="project" value="MGI"/>
</dbReference>
<dbReference type="FunFam" id="1.10.533.20:FF:000001">
    <property type="entry name" value="NLR family CARD domain containing 5"/>
    <property type="match status" value="1"/>
</dbReference>
<dbReference type="FunFam" id="3.40.50.300:FF:001114">
    <property type="entry name" value="NLR family CARD domain containing 5"/>
    <property type="match status" value="1"/>
</dbReference>
<dbReference type="FunFam" id="3.80.10.10:FF:000255">
    <property type="entry name" value="NLR family CARD domain containing 5"/>
    <property type="match status" value="1"/>
</dbReference>
<dbReference type="FunFam" id="3.80.10.10:FF:000264">
    <property type="entry name" value="NLR family CARD domain containing 5"/>
    <property type="match status" value="1"/>
</dbReference>
<dbReference type="FunFam" id="3.80.10.10:FF:000267">
    <property type="entry name" value="NLR family CARD domain containing 5"/>
    <property type="match status" value="1"/>
</dbReference>
<dbReference type="Gene3D" id="1.10.533.20">
    <property type="match status" value="1"/>
</dbReference>
<dbReference type="Gene3D" id="3.40.50.300">
    <property type="entry name" value="P-loop containing nucleotide triphosphate hydrolases"/>
    <property type="match status" value="1"/>
</dbReference>
<dbReference type="Gene3D" id="3.80.10.10">
    <property type="entry name" value="Ribonuclease Inhibitor"/>
    <property type="match status" value="7"/>
</dbReference>
<dbReference type="InterPro" id="IPR001611">
    <property type="entry name" value="Leu-rich_rpt"/>
</dbReference>
<dbReference type="InterPro" id="IPR006553">
    <property type="entry name" value="Leu-rich_rpt_Cys-con_subtyp"/>
</dbReference>
<dbReference type="InterPro" id="IPR003591">
    <property type="entry name" value="Leu-rich_rpt_typical-subtyp"/>
</dbReference>
<dbReference type="InterPro" id="IPR032675">
    <property type="entry name" value="LRR_dom_sf"/>
</dbReference>
<dbReference type="InterPro" id="IPR007111">
    <property type="entry name" value="NACHT_NTPase"/>
</dbReference>
<dbReference type="InterPro" id="IPR041210">
    <property type="entry name" value="NLRC5_atypical_Card"/>
</dbReference>
<dbReference type="InterPro" id="IPR041267">
    <property type="entry name" value="NLRP_HD2"/>
</dbReference>
<dbReference type="InterPro" id="IPR027417">
    <property type="entry name" value="P-loop_NTPase"/>
</dbReference>
<dbReference type="PANTHER" id="PTHR47189">
    <property type="entry name" value="MHC CLASS II TRANSACTIVATOR"/>
    <property type="match status" value="1"/>
</dbReference>
<dbReference type="PANTHER" id="PTHR47189:SF1">
    <property type="entry name" value="MHC CLASS II TRANSACTIVATOR"/>
    <property type="match status" value="1"/>
</dbReference>
<dbReference type="Pfam" id="PF18461">
    <property type="entry name" value="Atypical_Card"/>
    <property type="match status" value="1"/>
</dbReference>
<dbReference type="Pfam" id="PF13516">
    <property type="entry name" value="LRR_6"/>
    <property type="match status" value="9"/>
</dbReference>
<dbReference type="Pfam" id="PF05729">
    <property type="entry name" value="NACHT"/>
    <property type="match status" value="1"/>
</dbReference>
<dbReference type="Pfam" id="PF17776">
    <property type="entry name" value="NLRC4_HD2"/>
    <property type="match status" value="1"/>
</dbReference>
<dbReference type="PRINTS" id="PR00364">
    <property type="entry name" value="DISEASERSIST"/>
</dbReference>
<dbReference type="SMART" id="SM00367">
    <property type="entry name" value="LRR_CC"/>
    <property type="match status" value="13"/>
</dbReference>
<dbReference type="SMART" id="SM00368">
    <property type="entry name" value="LRR_RI"/>
    <property type="match status" value="20"/>
</dbReference>
<dbReference type="SMART" id="SM00369">
    <property type="entry name" value="LRR_TYP"/>
    <property type="match status" value="9"/>
</dbReference>
<dbReference type="SUPFAM" id="SSF52540">
    <property type="entry name" value="P-loop containing nucleoside triphosphate hydrolases"/>
    <property type="match status" value="1"/>
</dbReference>
<dbReference type="SUPFAM" id="SSF52047">
    <property type="entry name" value="RNI-like"/>
    <property type="match status" value="4"/>
</dbReference>
<dbReference type="PROSITE" id="PS50837">
    <property type="entry name" value="NACHT"/>
    <property type="match status" value="1"/>
</dbReference>
<keyword id="KW-0002">3D-structure</keyword>
<keyword id="KW-0025">Alternative splicing</keyword>
<keyword id="KW-0067">ATP-binding</keyword>
<keyword id="KW-0963">Cytoplasm</keyword>
<keyword id="KW-0391">Immunity</keyword>
<keyword id="KW-0399">Innate immunity</keyword>
<keyword id="KW-0433">Leucine-rich repeat</keyword>
<keyword id="KW-0547">Nucleotide-binding</keyword>
<keyword id="KW-1185">Reference proteome</keyword>
<keyword id="KW-0677">Repeat</keyword>